<name>MATK_TYPLA</name>
<reference key="1">
    <citation type="journal article" date="2004" name="J. Plant Res.">
        <title>Molecular phylogeny of monocotyledons inferred from combined analysis of plastid matK and rbcL gene sequences.</title>
        <authorList>
            <person name="Tamura M.N."/>
            <person name="Yamashita J."/>
            <person name="Fuse S."/>
            <person name="Haraguchi M."/>
        </authorList>
    </citation>
    <scope>NUCLEOTIDE SEQUENCE [GENOMIC DNA]</scope>
</reference>
<accession>Q6LA06</accession>
<organism>
    <name type="scientific">Typha latifolia</name>
    <name type="common">Bulrush</name>
    <name type="synonym">Broadleaf cattail</name>
    <dbReference type="NCBI Taxonomy" id="4733"/>
    <lineage>
        <taxon>Eukaryota</taxon>
        <taxon>Viridiplantae</taxon>
        <taxon>Streptophyta</taxon>
        <taxon>Embryophyta</taxon>
        <taxon>Tracheophyta</taxon>
        <taxon>Spermatophyta</taxon>
        <taxon>Magnoliopsida</taxon>
        <taxon>Liliopsida</taxon>
        <taxon>Poales</taxon>
        <taxon>Typhaceae</taxon>
        <taxon>Typha</taxon>
    </lineage>
</organism>
<gene>
    <name evidence="1" type="primary">matK</name>
</gene>
<proteinExistence type="inferred from homology"/>
<comment type="function">
    <text evidence="1">Usually encoded in the trnK tRNA gene intron. Probably assists in splicing its own and other chloroplast group II introns.</text>
</comment>
<comment type="subcellular location">
    <subcellularLocation>
        <location>Plastid</location>
        <location>Chloroplast</location>
    </subcellularLocation>
</comment>
<comment type="similarity">
    <text evidence="1">Belongs to the intron maturase 2 family. MatK subfamily.</text>
</comment>
<keyword id="KW-0150">Chloroplast</keyword>
<keyword id="KW-0507">mRNA processing</keyword>
<keyword id="KW-0934">Plastid</keyword>
<keyword id="KW-0694">RNA-binding</keyword>
<keyword id="KW-0819">tRNA processing</keyword>
<protein>
    <recommendedName>
        <fullName evidence="1">Maturase K</fullName>
    </recommendedName>
    <alternativeName>
        <fullName evidence="1">Intron maturase</fullName>
    </alternativeName>
</protein>
<evidence type="ECO:0000255" key="1">
    <source>
        <dbReference type="HAMAP-Rule" id="MF_01390"/>
    </source>
</evidence>
<dbReference type="EMBL" id="AB088801">
    <property type="protein sequence ID" value="BAD20595.1"/>
    <property type="molecule type" value="Genomic_DNA"/>
</dbReference>
<dbReference type="GO" id="GO:0009507">
    <property type="term" value="C:chloroplast"/>
    <property type="evidence" value="ECO:0007669"/>
    <property type="project" value="UniProtKB-SubCell"/>
</dbReference>
<dbReference type="GO" id="GO:0003723">
    <property type="term" value="F:RNA binding"/>
    <property type="evidence" value="ECO:0007669"/>
    <property type="project" value="UniProtKB-KW"/>
</dbReference>
<dbReference type="GO" id="GO:0006397">
    <property type="term" value="P:mRNA processing"/>
    <property type="evidence" value="ECO:0007669"/>
    <property type="project" value="UniProtKB-KW"/>
</dbReference>
<dbReference type="GO" id="GO:0008380">
    <property type="term" value="P:RNA splicing"/>
    <property type="evidence" value="ECO:0007669"/>
    <property type="project" value="UniProtKB-UniRule"/>
</dbReference>
<dbReference type="GO" id="GO:0008033">
    <property type="term" value="P:tRNA processing"/>
    <property type="evidence" value="ECO:0007669"/>
    <property type="project" value="UniProtKB-KW"/>
</dbReference>
<dbReference type="HAMAP" id="MF_01390">
    <property type="entry name" value="MatK"/>
    <property type="match status" value="1"/>
</dbReference>
<dbReference type="InterPro" id="IPR024937">
    <property type="entry name" value="Domain_X"/>
</dbReference>
<dbReference type="InterPro" id="IPR002866">
    <property type="entry name" value="Maturase_MatK"/>
</dbReference>
<dbReference type="InterPro" id="IPR024942">
    <property type="entry name" value="Maturase_MatK_N"/>
</dbReference>
<dbReference type="PANTHER" id="PTHR34811">
    <property type="entry name" value="MATURASE K"/>
    <property type="match status" value="1"/>
</dbReference>
<dbReference type="PANTHER" id="PTHR34811:SF1">
    <property type="entry name" value="MATURASE K"/>
    <property type="match status" value="1"/>
</dbReference>
<dbReference type="Pfam" id="PF01348">
    <property type="entry name" value="Intron_maturas2"/>
    <property type="match status" value="1"/>
</dbReference>
<dbReference type="Pfam" id="PF01824">
    <property type="entry name" value="MatK_N"/>
    <property type="match status" value="1"/>
</dbReference>
<feature type="chain" id="PRO_0000143773" description="Maturase K">
    <location>
        <begin position="1"/>
        <end position="513"/>
    </location>
</feature>
<geneLocation type="chloroplast"/>
<sequence>MKQLHVQKYLEKVRSRKQHFLYPLLFKEYIYAFAHDYGLNGSIFYEPTEILGNDNKSSSVLVKRLIIRMYQQNYLINSTNHSNQNRFLGHNNYFYSRFFSQMISESFAVIMEILFSLRLVSSSEKKEIPQFHNLRSIHSIFPFLEDKLSHLNSISDILIPHPIHLEILVQILQCRIQDVPSLHLLRFFLHEYHNWNSLITSKKSIYVFSKENKRLFRLLYNFYVFECEFVFVFLRKQSSYLQLTSFGTFLERIHFYGKIEHLLVVYRNFFNKTLWFFTDPFMHYVRYQGKAILASKGTHLFMKKWKCYLVNFWQYYFHFWSQPHRIHINQLSNYSFHFLGYLSSLLRNPLVVRNQMLENSYLIDTVMTKFDTIXPVDPLIGSLSKAKFXTLLGHPISKPIWTDLSDCDIIDRFGRICRXLSHYYSGSSKKRTLYRIKYILRFSCARTLARXHKSTVRTFMQRLGSVLLEEFFTEEEQVLSLIFPKTTPFSLHGSHRERIWYLDIIRINDLVNH</sequence>